<comment type="function">
    <text evidence="1">Catalyzes the isomerization between 2-isopropylmalate and 3-isopropylmalate, via the formation of 2-isopropylmaleate.</text>
</comment>
<comment type="catalytic activity">
    <reaction evidence="1">
        <text>(2R,3S)-3-isopropylmalate = (2S)-2-isopropylmalate</text>
        <dbReference type="Rhea" id="RHEA:32287"/>
        <dbReference type="ChEBI" id="CHEBI:1178"/>
        <dbReference type="ChEBI" id="CHEBI:35121"/>
        <dbReference type="EC" id="4.2.1.33"/>
    </reaction>
</comment>
<comment type="pathway">
    <text evidence="1">Amino-acid biosynthesis; L-leucine biosynthesis; L-leucine from 3-methyl-2-oxobutanoate: step 2/4.</text>
</comment>
<comment type="subunit">
    <text evidence="1">Heterodimer of LeuC and LeuD.</text>
</comment>
<comment type="similarity">
    <text evidence="1">Belongs to the LeuD family. LeuD type 1 subfamily.</text>
</comment>
<proteinExistence type="inferred from homology"/>
<feature type="chain" id="PRO_0000141808" description="3-isopropylmalate dehydratase small subunit">
    <location>
        <begin position="1"/>
        <end position="200"/>
    </location>
</feature>
<reference key="1">
    <citation type="journal article" date="2005" name="PLoS Biol.">
        <title>Major structural differences and novel potential virulence mechanisms from the genomes of multiple Campylobacter species.</title>
        <authorList>
            <person name="Fouts D.E."/>
            <person name="Mongodin E.F."/>
            <person name="Mandrell R.E."/>
            <person name="Miller W.G."/>
            <person name="Rasko D.A."/>
            <person name="Ravel J."/>
            <person name="Brinkac L.M."/>
            <person name="DeBoy R.T."/>
            <person name="Parker C.T."/>
            <person name="Daugherty S.C."/>
            <person name="Dodson R.J."/>
            <person name="Durkin A.S."/>
            <person name="Madupu R."/>
            <person name="Sullivan S.A."/>
            <person name="Shetty J.U."/>
            <person name="Ayodeji M.A."/>
            <person name="Shvartsbeyn A."/>
            <person name="Schatz M.C."/>
            <person name="Badger J.H."/>
            <person name="Fraser C.M."/>
            <person name="Nelson K.E."/>
        </authorList>
    </citation>
    <scope>NUCLEOTIDE SEQUENCE [LARGE SCALE GENOMIC DNA]</scope>
    <source>
        <strain>RM1221</strain>
    </source>
</reference>
<keyword id="KW-0028">Amino-acid biosynthesis</keyword>
<keyword id="KW-0100">Branched-chain amino acid biosynthesis</keyword>
<keyword id="KW-0432">Leucine biosynthesis</keyword>
<keyword id="KW-0456">Lyase</keyword>
<evidence type="ECO:0000255" key="1">
    <source>
        <dbReference type="HAMAP-Rule" id="MF_01031"/>
    </source>
</evidence>
<name>LEUD_CAMJR</name>
<accession>Q5HS79</accession>
<organism>
    <name type="scientific">Campylobacter jejuni (strain RM1221)</name>
    <dbReference type="NCBI Taxonomy" id="195099"/>
    <lineage>
        <taxon>Bacteria</taxon>
        <taxon>Pseudomonadati</taxon>
        <taxon>Campylobacterota</taxon>
        <taxon>Epsilonproteobacteria</taxon>
        <taxon>Campylobacterales</taxon>
        <taxon>Campylobacteraceae</taxon>
        <taxon>Campylobacter</taxon>
    </lineage>
</organism>
<gene>
    <name evidence="1" type="primary">leuD</name>
    <name type="ordered locus">CJE1886</name>
</gene>
<dbReference type="EC" id="4.2.1.33" evidence="1"/>
<dbReference type="EMBL" id="CP000025">
    <property type="protein sequence ID" value="AAW34486.1"/>
    <property type="molecule type" value="Genomic_DNA"/>
</dbReference>
<dbReference type="RefSeq" id="WP_002867510.1">
    <property type="nucleotide sequence ID" value="NC_003912.7"/>
</dbReference>
<dbReference type="SMR" id="Q5HS79"/>
<dbReference type="KEGG" id="cjr:CJE1886"/>
<dbReference type="HOGENOM" id="CLU_081378_0_3_7"/>
<dbReference type="UniPathway" id="UPA00048">
    <property type="reaction ID" value="UER00071"/>
</dbReference>
<dbReference type="GO" id="GO:0009316">
    <property type="term" value="C:3-isopropylmalate dehydratase complex"/>
    <property type="evidence" value="ECO:0007669"/>
    <property type="project" value="InterPro"/>
</dbReference>
<dbReference type="GO" id="GO:0003861">
    <property type="term" value="F:3-isopropylmalate dehydratase activity"/>
    <property type="evidence" value="ECO:0007669"/>
    <property type="project" value="UniProtKB-UniRule"/>
</dbReference>
<dbReference type="GO" id="GO:0009098">
    <property type="term" value="P:L-leucine biosynthetic process"/>
    <property type="evidence" value="ECO:0007669"/>
    <property type="project" value="UniProtKB-UniRule"/>
</dbReference>
<dbReference type="CDD" id="cd01577">
    <property type="entry name" value="IPMI_Swivel"/>
    <property type="match status" value="1"/>
</dbReference>
<dbReference type="FunFam" id="3.20.19.10:FF:000003">
    <property type="entry name" value="3-isopropylmalate dehydratase small subunit"/>
    <property type="match status" value="1"/>
</dbReference>
<dbReference type="Gene3D" id="3.20.19.10">
    <property type="entry name" value="Aconitase, domain 4"/>
    <property type="match status" value="1"/>
</dbReference>
<dbReference type="HAMAP" id="MF_01031">
    <property type="entry name" value="LeuD_type1"/>
    <property type="match status" value="1"/>
</dbReference>
<dbReference type="InterPro" id="IPR004431">
    <property type="entry name" value="3-IsopropMal_deHydase_ssu"/>
</dbReference>
<dbReference type="InterPro" id="IPR015928">
    <property type="entry name" value="Aconitase/3IPM_dehydase_swvl"/>
</dbReference>
<dbReference type="InterPro" id="IPR000573">
    <property type="entry name" value="AconitaseA/IPMdHydase_ssu_swvl"/>
</dbReference>
<dbReference type="InterPro" id="IPR033940">
    <property type="entry name" value="IPMI_Swivel"/>
</dbReference>
<dbReference type="InterPro" id="IPR050075">
    <property type="entry name" value="LeuD"/>
</dbReference>
<dbReference type="NCBIfam" id="TIGR00171">
    <property type="entry name" value="leuD"/>
    <property type="match status" value="1"/>
</dbReference>
<dbReference type="NCBIfam" id="NF002458">
    <property type="entry name" value="PRK01641.1"/>
    <property type="match status" value="1"/>
</dbReference>
<dbReference type="PANTHER" id="PTHR43345:SF5">
    <property type="entry name" value="3-ISOPROPYLMALATE DEHYDRATASE SMALL SUBUNIT"/>
    <property type="match status" value="1"/>
</dbReference>
<dbReference type="PANTHER" id="PTHR43345">
    <property type="entry name" value="3-ISOPROPYLMALATE DEHYDRATASE SMALL SUBUNIT 2-RELATED-RELATED"/>
    <property type="match status" value="1"/>
</dbReference>
<dbReference type="Pfam" id="PF00694">
    <property type="entry name" value="Aconitase_C"/>
    <property type="match status" value="1"/>
</dbReference>
<dbReference type="SUPFAM" id="SSF52016">
    <property type="entry name" value="LeuD/IlvD-like"/>
    <property type="match status" value="1"/>
</dbReference>
<sequence>MQKFIIHKGIACPLEYANIDTDQIIPKQFLLAVSKQGFGRHLFHDLRYLDDKESVLNMDFNLNKKEYQNSSILVSFENFGSGSSREHAPWALVDYGIRAIIAPSFADIFKNNALGNGLLTIELAKDEVLEIVDELKKSQDKNIEISLLEKRVFFKDKIFSFDLDNFHRICLLEGLDNIALTLKHEAQIKAYEKNSKSFLV</sequence>
<protein>
    <recommendedName>
        <fullName evidence="1">3-isopropylmalate dehydratase small subunit</fullName>
        <ecNumber evidence="1">4.2.1.33</ecNumber>
    </recommendedName>
    <alternativeName>
        <fullName evidence="1">Alpha-IPM isomerase</fullName>
        <shortName evidence="1">IPMI</shortName>
    </alternativeName>
    <alternativeName>
        <fullName evidence="1">Isopropylmalate isomerase</fullName>
    </alternativeName>
</protein>